<organism>
    <name type="scientific">Turkey enteric coronavirus</name>
    <name type="common">TCoV</name>
    <name type="synonym">TCV</name>
    <dbReference type="NCBI Taxonomy" id="11152"/>
    <lineage>
        <taxon>Viruses</taxon>
        <taxon>Riboviria</taxon>
        <taxon>Orthornavirae</taxon>
        <taxon>Pisuviricota</taxon>
        <taxon>Pisoniviricetes</taxon>
        <taxon>Nidovirales</taxon>
        <taxon>Cornidovirineae</taxon>
        <taxon>Coronaviridae</taxon>
        <taxon>Orthocoronavirinae</taxon>
        <taxon>Gammacoronavirus</taxon>
        <taxon>Igacovirus</taxon>
        <taxon>Avian coronavirus</taxon>
    </lineage>
</organism>
<reference key="1">
    <citation type="journal article" date="1991" name="J. Gen. Virol.">
        <title>Sequence analysis of the turkey enteric coronavirus nucleocapsid and membrane protein genes: a close genomic relationship with bovine coronavirus.</title>
        <authorList>
            <person name="Verbeek A."/>
            <person name="Tijssen P."/>
        </authorList>
    </citation>
    <scope>NUCLEOTIDE SEQUENCE</scope>
    <source>
        <strain>Minnesota</strain>
    </source>
</reference>
<feature type="chain" id="PRO_0000106120" description="Protein I">
    <location>
        <begin position="1"/>
        <end position="207"/>
    </location>
</feature>
<keyword id="KW-0946">Virion</keyword>
<comment type="function">
    <text evidence="1">Structural protein that is not essential for the viral replication either in tissue culture or in its natural host.</text>
</comment>
<comment type="subcellular location">
    <subcellularLocation>
        <location evidence="1">Virion</location>
    </subcellularLocation>
</comment>
<comment type="miscellaneous">
    <text>The gene encoding this protein is included within the N gene (alternative ORF).</text>
</comment>
<comment type="similarity">
    <text evidence="2">Belongs to the coronavirus I protein family.</text>
</comment>
<gene>
    <name type="primary">N</name>
    <name type="synonym">I</name>
</gene>
<name>IORF_CVTKE</name>
<evidence type="ECO:0000250" key="1"/>
<evidence type="ECO:0000305" key="2"/>
<protein>
    <recommendedName>
        <fullName>Protein I</fullName>
    </recommendedName>
    <alternativeName>
        <fullName>Accessory protein N2</fullName>
    </alternativeName>
    <alternativeName>
        <fullName>N internal ORF protein</fullName>
        <shortName>IORF</shortName>
    </alternativeName>
    <alternativeName>
        <fullName>Protein in nucleocapsid ORF</fullName>
    </alternativeName>
</protein>
<sequence>MASLSGPISPTNLEMFKPGVEELNPSKLLLLSNHQEGMLYPTILGSLELLSFKKERSLNLQRDKVCLLHQESQLLKLRGTGTDTTDVLLKQPMATSVNCCHDGIFTILEQDRMPKTSMAPILTESSGSLVTRLMSIPRLTFSIGTQVAMRLFRLGFRLARYSLRVTILKAQEGLLLIPDLLHAHPVEPLVQDRVVEPILATEPLPLV</sequence>
<accession>P26626</accession>
<proteinExistence type="inferred from homology"/>
<dbReference type="PIR" id="JQ1174">
    <property type="entry name" value="JQ1174"/>
</dbReference>
<dbReference type="GO" id="GO:0044423">
    <property type="term" value="C:virion component"/>
    <property type="evidence" value="ECO:0007669"/>
    <property type="project" value="UniProtKB-KW"/>
</dbReference>
<dbReference type="CDD" id="cd21662">
    <property type="entry name" value="embe-CoV_Protein-I_like"/>
    <property type="match status" value="1"/>
</dbReference>
<dbReference type="InterPro" id="IPR004876">
    <property type="entry name" value="Corona_nucI"/>
</dbReference>
<dbReference type="InterPro" id="IPR044311">
    <property type="entry name" value="N2-like_embe-CoV"/>
</dbReference>
<dbReference type="Pfam" id="PF03187">
    <property type="entry name" value="Corona_I"/>
    <property type="match status" value="1"/>
</dbReference>
<organismHost>
    <name type="scientific">Meleagris gallopavo</name>
    <name type="common">Wild turkey</name>
    <dbReference type="NCBI Taxonomy" id="9103"/>
</organismHost>